<reference key="1">
    <citation type="journal article" date="2001" name="Nature">
        <title>Genome sequence of Yersinia pestis, the causative agent of plague.</title>
        <authorList>
            <person name="Parkhill J."/>
            <person name="Wren B.W."/>
            <person name="Thomson N.R."/>
            <person name="Titball R.W."/>
            <person name="Holden M.T.G."/>
            <person name="Prentice M.B."/>
            <person name="Sebaihia M."/>
            <person name="James K.D."/>
            <person name="Churcher C.M."/>
            <person name="Mungall K.L."/>
            <person name="Baker S."/>
            <person name="Basham D."/>
            <person name="Bentley S.D."/>
            <person name="Brooks K."/>
            <person name="Cerdeno-Tarraga A.-M."/>
            <person name="Chillingworth T."/>
            <person name="Cronin A."/>
            <person name="Davies R.M."/>
            <person name="Davis P."/>
            <person name="Dougan G."/>
            <person name="Feltwell T."/>
            <person name="Hamlin N."/>
            <person name="Holroyd S."/>
            <person name="Jagels K."/>
            <person name="Karlyshev A.V."/>
            <person name="Leather S."/>
            <person name="Moule S."/>
            <person name="Oyston P.C.F."/>
            <person name="Quail M.A."/>
            <person name="Rutherford K.M."/>
            <person name="Simmonds M."/>
            <person name="Skelton J."/>
            <person name="Stevens K."/>
            <person name="Whitehead S."/>
            <person name="Barrell B.G."/>
        </authorList>
    </citation>
    <scope>NUCLEOTIDE SEQUENCE [LARGE SCALE GENOMIC DNA]</scope>
    <source>
        <strain>CO-92 / Biovar Orientalis</strain>
    </source>
</reference>
<reference key="2">
    <citation type="journal article" date="2002" name="J. Bacteriol.">
        <title>Genome sequence of Yersinia pestis KIM.</title>
        <authorList>
            <person name="Deng W."/>
            <person name="Burland V."/>
            <person name="Plunkett G. III"/>
            <person name="Boutin A."/>
            <person name="Mayhew G.F."/>
            <person name="Liss P."/>
            <person name="Perna N.T."/>
            <person name="Rose D.J."/>
            <person name="Mau B."/>
            <person name="Zhou S."/>
            <person name="Schwartz D.C."/>
            <person name="Fetherston J.D."/>
            <person name="Lindler L.E."/>
            <person name="Brubaker R.R."/>
            <person name="Plano G.V."/>
            <person name="Straley S.C."/>
            <person name="McDonough K.A."/>
            <person name="Nilles M.L."/>
            <person name="Matson J.S."/>
            <person name="Blattner F.R."/>
            <person name="Perry R.D."/>
        </authorList>
    </citation>
    <scope>NUCLEOTIDE SEQUENCE [LARGE SCALE GENOMIC DNA]</scope>
    <source>
        <strain>KIM10+ / Biovar Mediaevalis</strain>
    </source>
</reference>
<reference key="3">
    <citation type="journal article" date="2004" name="DNA Res.">
        <title>Complete genome sequence of Yersinia pestis strain 91001, an isolate avirulent to humans.</title>
        <authorList>
            <person name="Song Y."/>
            <person name="Tong Z."/>
            <person name="Wang J."/>
            <person name="Wang L."/>
            <person name="Guo Z."/>
            <person name="Han Y."/>
            <person name="Zhang J."/>
            <person name="Pei D."/>
            <person name="Zhou D."/>
            <person name="Qin H."/>
            <person name="Pang X."/>
            <person name="Han Y."/>
            <person name="Zhai J."/>
            <person name="Li M."/>
            <person name="Cui B."/>
            <person name="Qi Z."/>
            <person name="Jin L."/>
            <person name="Dai R."/>
            <person name="Chen F."/>
            <person name="Li S."/>
            <person name="Ye C."/>
            <person name="Du Z."/>
            <person name="Lin W."/>
            <person name="Wang J."/>
            <person name="Yu J."/>
            <person name="Yang H."/>
            <person name="Wang J."/>
            <person name="Huang P."/>
            <person name="Yang R."/>
        </authorList>
    </citation>
    <scope>NUCLEOTIDE SEQUENCE [LARGE SCALE GENOMIC DNA]</scope>
    <source>
        <strain>91001 / Biovar Mediaevalis</strain>
    </source>
</reference>
<feature type="chain" id="PRO_0000098323" description="DNA translocase FtsK">
    <location>
        <begin position="1"/>
        <end position="1305"/>
    </location>
</feature>
<feature type="transmembrane region" description="Helical" evidence="2">
    <location>
        <begin position="22"/>
        <end position="42"/>
    </location>
</feature>
<feature type="transmembrane region" description="Helical" evidence="2">
    <location>
        <begin position="75"/>
        <end position="95"/>
    </location>
</feature>
<feature type="transmembrane region" description="Helical" evidence="2">
    <location>
        <begin position="110"/>
        <end position="130"/>
    </location>
</feature>
<feature type="transmembrane region" description="Helical" evidence="2">
    <location>
        <begin position="138"/>
        <end position="158"/>
    </location>
</feature>
<feature type="transmembrane region" description="Helical" evidence="2">
    <location>
        <begin position="167"/>
        <end position="187"/>
    </location>
</feature>
<feature type="topological domain" description="Cytoplasmic" evidence="2">
    <location>
        <begin position="188"/>
        <end position="1305"/>
    </location>
</feature>
<feature type="domain" description="FtsK" evidence="3">
    <location>
        <begin position="949"/>
        <end position="1162"/>
    </location>
</feature>
<feature type="region of interest" description="Disordered" evidence="4">
    <location>
        <begin position="405"/>
        <end position="434"/>
    </location>
</feature>
<feature type="region of interest" description="Disordered" evidence="4">
    <location>
        <begin position="484"/>
        <end position="503"/>
    </location>
</feature>
<feature type="region of interest" description="Disordered" evidence="4">
    <location>
        <begin position="518"/>
        <end position="550"/>
    </location>
</feature>
<feature type="region of interest" description="Disordered" evidence="4">
    <location>
        <begin position="578"/>
        <end position="602"/>
    </location>
</feature>
<feature type="region of interest" description="Disordered" evidence="4">
    <location>
        <begin position="707"/>
        <end position="745"/>
    </location>
</feature>
<feature type="region of interest" description="Disordered" evidence="4">
    <location>
        <begin position="1286"/>
        <end position="1305"/>
    </location>
</feature>
<feature type="compositionally biased region" description="Low complexity" evidence="4">
    <location>
        <begin position="416"/>
        <end position="431"/>
    </location>
</feature>
<feature type="compositionally biased region" description="Basic and acidic residues" evidence="4">
    <location>
        <begin position="523"/>
        <end position="533"/>
    </location>
</feature>
<feature type="compositionally biased region" description="Polar residues" evidence="4">
    <location>
        <begin position="535"/>
        <end position="549"/>
    </location>
</feature>
<feature type="compositionally biased region" description="Polar residues" evidence="4">
    <location>
        <begin position="707"/>
        <end position="743"/>
    </location>
</feature>
<feature type="binding site" evidence="3">
    <location>
        <begin position="969"/>
        <end position="974"/>
    </location>
    <ligand>
        <name>ATP</name>
        <dbReference type="ChEBI" id="CHEBI:30616"/>
    </ligand>
</feature>
<feature type="sequence conflict" description="In Ref. 3; AAS61460." evidence="5" ref="3">
    <original>V</original>
    <variation>A</variation>
    <location>
        <position position="172"/>
    </location>
</feature>
<feature type="sequence conflict" description="In Ref. 3; AAS61460." evidence="5" ref="3">
    <original>T</original>
    <variation>A</variation>
    <location>
        <position position="289"/>
    </location>
</feature>
<feature type="sequence conflict" description="In Ref. 3; AAS61460." evidence="5" ref="3">
    <original>T</original>
    <variation>A</variation>
    <location>
        <position position="762"/>
    </location>
</feature>
<organism>
    <name type="scientific">Yersinia pestis</name>
    <dbReference type="NCBI Taxonomy" id="632"/>
    <lineage>
        <taxon>Bacteria</taxon>
        <taxon>Pseudomonadati</taxon>
        <taxon>Pseudomonadota</taxon>
        <taxon>Gammaproteobacteria</taxon>
        <taxon>Enterobacterales</taxon>
        <taxon>Yersiniaceae</taxon>
        <taxon>Yersinia</taxon>
    </lineage>
</organism>
<proteinExistence type="inferred from homology"/>
<accession>Q8ZGC7</accession>
<accession>Q0WH39</accession>
<keyword id="KW-0067">ATP-binding</keyword>
<keyword id="KW-0131">Cell cycle</keyword>
<keyword id="KW-0132">Cell division</keyword>
<keyword id="KW-0997">Cell inner membrane</keyword>
<keyword id="KW-1003">Cell membrane</keyword>
<keyword id="KW-0159">Chromosome partition</keyword>
<keyword id="KW-0238">DNA-binding</keyword>
<keyword id="KW-0472">Membrane</keyword>
<keyword id="KW-0547">Nucleotide-binding</keyword>
<keyword id="KW-1185">Reference proteome</keyword>
<keyword id="KW-0812">Transmembrane</keyword>
<keyword id="KW-1133">Transmembrane helix</keyword>
<gene>
    <name type="primary">ftsK</name>
    <name type="ordered locus">YPO1376</name>
    <name type="ordered locus">y2800</name>
    <name type="ordered locus">YP_1217</name>
</gene>
<protein>
    <recommendedName>
        <fullName>DNA translocase FtsK</fullName>
    </recommendedName>
</protein>
<dbReference type="EMBL" id="AL590842">
    <property type="protein sequence ID" value="CAL20028.1"/>
    <property type="molecule type" value="Genomic_DNA"/>
</dbReference>
<dbReference type="EMBL" id="AE009952">
    <property type="protein sequence ID" value="AAM86350.1"/>
    <property type="molecule type" value="Genomic_DNA"/>
</dbReference>
<dbReference type="EMBL" id="AE017042">
    <property type="protein sequence ID" value="AAS61460.1"/>
    <property type="molecule type" value="Genomic_DNA"/>
</dbReference>
<dbReference type="PIR" id="AB0168">
    <property type="entry name" value="AB0168"/>
</dbReference>
<dbReference type="RefSeq" id="WP_002211339.1">
    <property type="nucleotide sequence ID" value="NZ_WUCL01000089.1"/>
</dbReference>
<dbReference type="RefSeq" id="YP_002346399.1">
    <property type="nucleotide sequence ID" value="NC_003143.1"/>
</dbReference>
<dbReference type="SMR" id="Q8ZGC7"/>
<dbReference type="STRING" id="214092.YPO1376"/>
<dbReference type="PaxDb" id="214092-YPO1376"/>
<dbReference type="DNASU" id="1147746"/>
<dbReference type="EnsemblBacteria" id="AAS61460">
    <property type="protein sequence ID" value="AAS61460"/>
    <property type="gene ID" value="YP_1217"/>
</dbReference>
<dbReference type="KEGG" id="ype:YPO1376"/>
<dbReference type="KEGG" id="ypk:y2800"/>
<dbReference type="KEGG" id="ypm:YP_1217"/>
<dbReference type="PATRIC" id="fig|214092.21.peg.1699"/>
<dbReference type="eggNOG" id="COG1674">
    <property type="taxonomic scope" value="Bacteria"/>
</dbReference>
<dbReference type="eggNOG" id="COG3107">
    <property type="taxonomic scope" value="Bacteria"/>
</dbReference>
<dbReference type="HOGENOM" id="CLU_001981_0_2_6"/>
<dbReference type="OMA" id="DPFWKPG"/>
<dbReference type="OrthoDB" id="9807790at2"/>
<dbReference type="Proteomes" id="UP000000815">
    <property type="component" value="Chromosome"/>
</dbReference>
<dbReference type="Proteomes" id="UP000001019">
    <property type="component" value="Chromosome"/>
</dbReference>
<dbReference type="Proteomes" id="UP000002490">
    <property type="component" value="Chromosome"/>
</dbReference>
<dbReference type="GO" id="GO:0005886">
    <property type="term" value="C:plasma membrane"/>
    <property type="evidence" value="ECO:0007669"/>
    <property type="project" value="UniProtKB-SubCell"/>
</dbReference>
<dbReference type="GO" id="GO:0005524">
    <property type="term" value="F:ATP binding"/>
    <property type="evidence" value="ECO:0007669"/>
    <property type="project" value="UniProtKB-KW"/>
</dbReference>
<dbReference type="GO" id="GO:0003677">
    <property type="term" value="F:DNA binding"/>
    <property type="evidence" value="ECO:0007669"/>
    <property type="project" value="UniProtKB-KW"/>
</dbReference>
<dbReference type="GO" id="GO:0015616">
    <property type="term" value="F:DNA translocase activity"/>
    <property type="evidence" value="ECO:0000318"/>
    <property type="project" value="GO_Central"/>
</dbReference>
<dbReference type="GO" id="GO:0051301">
    <property type="term" value="P:cell division"/>
    <property type="evidence" value="ECO:0007669"/>
    <property type="project" value="UniProtKB-KW"/>
</dbReference>
<dbReference type="GO" id="GO:0007059">
    <property type="term" value="P:chromosome segregation"/>
    <property type="evidence" value="ECO:0007669"/>
    <property type="project" value="UniProtKB-KW"/>
</dbReference>
<dbReference type="CDD" id="cd01127">
    <property type="entry name" value="TrwB_TraG_TraD_VirD4"/>
    <property type="match status" value="1"/>
</dbReference>
<dbReference type="FunFam" id="3.40.50.300:FF:000209">
    <property type="entry name" value="Cell division protein FtsK"/>
    <property type="match status" value="1"/>
</dbReference>
<dbReference type="FunFam" id="3.30.980.40:FF:000001">
    <property type="entry name" value="DNA translocase FtsK"/>
    <property type="match status" value="1"/>
</dbReference>
<dbReference type="Gene3D" id="3.30.980.40">
    <property type="match status" value="1"/>
</dbReference>
<dbReference type="Gene3D" id="3.40.50.300">
    <property type="entry name" value="P-loop containing nucleotide triphosphate hydrolases"/>
    <property type="match status" value="1"/>
</dbReference>
<dbReference type="Gene3D" id="1.10.10.10">
    <property type="entry name" value="Winged helix-like DNA-binding domain superfamily/Winged helix DNA-binding domain"/>
    <property type="match status" value="1"/>
</dbReference>
<dbReference type="InterPro" id="IPR050206">
    <property type="entry name" value="FtsK/SpoIIIE/SftA"/>
</dbReference>
<dbReference type="InterPro" id="IPR025199">
    <property type="entry name" value="FtsK_4TM"/>
</dbReference>
<dbReference type="InterPro" id="IPR041027">
    <property type="entry name" value="FtsK_alpha"/>
</dbReference>
<dbReference type="InterPro" id="IPR002543">
    <property type="entry name" value="FtsK_dom"/>
</dbReference>
<dbReference type="InterPro" id="IPR018541">
    <property type="entry name" value="Ftsk_gamma"/>
</dbReference>
<dbReference type="InterPro" id="IPR027417">
    <property type="entry name" value="P-loop_NTPase"/>
</dbReference>
<dbReference type="InterPro" id="IPR036388">
    <property type="entry name" value="WH-like_DNA-bd_sf"/>
</dbReference>
<dbReference type="InterPro" id="IPR036390">
    <property type="entry name" value="WH_DNA-bd_sf"/>
</dbReference>
<dbReference type="PANTHER" id="PTHR22683:SF41">
    <property type="entry name" value="DNA TRANSLOCASE FTSK"/>
    <property type="match status" value="1"/>
</dbReference>
<dbReference type="PANTHER" id="PTHR22683">
    <property type="entry name" value="SPORULATION PROTEIN RELATED"/>
    <property type="match status" value="1"/>
</dbReference>
<dbReference type="Pfam" id="PF13491">
    <property type="entry name" value="FtsK_4TM"/>
    <property type="match status" value="1"/>
</dbReference>
<dbReference type="Pfam" id="PF17854">
    <property type="entry name" value="FtsK_alpha"/>
    <property type="match status" value="1"/>
</dbReference>
<dbReference type="Pfam" id="PF09397">
    <property type="entry name" value="FtsK_gamma"/>
    <property type="match status" value="1"/>
</dbReference>
<dbReference type="Pfam" id="PF01580">
    <property type="entry name" value="FtsK_SpoIIIE"/>
    <property type="match status" value="1"/>
</dbReference>
<dbReference type="SMART" id="SM00843">
    <property type="entry name" value="Ftsk_gamma"/>
    <property type="match status" value="1"/>
</dbReference>
<dbReference type="SUPFAM" id="SSF81995">
    <property type="entry name" value="beta-sandwich domain of Sec23/24"/>
    <property type="match status" value="1"/>
</dbReference>
<dbReference type="SUPFAM" id="SSF52540">
    <property type="entry name" value="P-loop containing nucleoside triphosphate hydrolases"/>
    <property type="match status" value="1"/>
</dbReference>
<dbReference type="SUPFAM" id="SSF46785">
    <property type="entry name" value="Winged helix' DNA-binding domain"/>
    <property type="match status" value="1"/>
</dbReference>
<dbReference type="PROSITE" id="PS50901">
    <property type="entry name" value="FTSK"/>
    <property type="match status" value="1"/>
</dbReference>
<name>FTSK_YERPE</name>
<sequence>MSQEYTEDKEVTLKKLSNGRRLLEAVLIVVTILAAYLMVALVSFNPSDPSWSQTAWHEPIHNLGGSIGAWMADTLFSTFGVLAYAIPPIMVIFCWTAFRQRDASEYLDYFALSLRLIGTLALILTSCGLAALNIDDLYYFASGGVIGSLFSNAMLPWFNGVGATLTLLCIWVVGLTLFTGWSWLVIAEKIGAAVLGSLTFITNRSRREERYDDEDSYHDDDHADGRDITGQEKGVVSNKGVVSNNAVVGAGVAASSALAHGDDDVLFSAPSVTDSIVEHGSVVATGTETTDTKATDTNDEYDPLLSPLRATDYSVQDATSSPIADVAVEPVLNHDAAAIYGTTPVMTNTATPPLYSFELPEESLPIQTHAAPTERPEPKLGAWDMSPTPVSHSPFDFSAIQRPVGQLESRQPGSNQSGSHQIHSAQSSHISVGNTPYMNPGLDAQIDGLSTTSLTNKPVLASGTVAAATAAAAFMPAFTATSDSSSQIKQGIGPELPRPNPVRIPTRRELASFGIKLPSQRMAEQELRERDGDETQNPQMAASSYGTEITSDEDAALQQAILRKAFADQQSERYALSTLAEQSSITERSPAAEMPTTPSQVSDLEDEQALQEAELRQAFAAQQQHRYGATGDTDNAVDNIRSVDTSTAFTFSPIADLVDDSPREPLFTLSPYVDETDVDEPVQLEGKEESLLQDYPEQVPTYQPPVQQAHLGQSAPTQPSHTQSTYGQSTYGQSTYGQSTPAPVSQPVVTSASAISTSVTPTSIASLNTAPVSAAPVAPSPQPPAFSQPTAAMDSLIHPFLMRNDQPLQKPTTPLPTLDLLSSPPAEEEPVDMFALEQTARLVEARLGDYRVKAEVVGISPGPVITRFELDLAPGVKASRISNLSRDLARSLSAIAVRVVEVIPGKPYVGLELPNKHRQTVYLREVLDCAKFRENPSPLAIVLGKDIAGQPVVADLAKMPHLLVAGTTGSGKSVGVNAMILSILYKATPDDVRFIMIDPKMLELSVYEGIPHLLTGVVTDMKDAANALRWCVGEMERRYKLMSALGVRNLAGYNERVAQAEAMGRPIPDPFWKPSDSMDISPPMLVKLPYIVVMVDEFADLMMTVGKKVEELIARLAQKARAAGIHLVLATQRPSVDVITGLIKANIPTRIAFTVSSKIDSRTILDQGGAESLLGMGDMLYMAPNSSIPVRVHGAFVRDQEVHAVVNDWKARGRPQYIDSILSGGEEGEGGGLGLDSDEELDPLFDQAVNFVLEKRRASISGVQRQFRIGYNRAARIIEQMEAQQIVSTPGHNGNREVLAPPPHE</sequence>
<comment type="function">
    <text evidence="1">Essential cell division protein that coordinates cell division and chromosome segregation. The N-terminus is involved in assembly of the cell-division machinery. The C-terminus functions as a DNA motor that moves dsDNA in an ATP-dependent manner towards the dif recombination site, which is located within the replication terminus region. Translocation stops specifically at Xer-dif sites, where FtsK interacts with the Xer recombinase, allowing activation of chromosome unlinking by recombination. FtsK orienting polar sequences (KOPS) guide the direction of DNA translocation. FtsK can remove proteins from DNA as it translocates, but translocation stops specifically at XerCD-dif site, thereby preventing removal of XerC and XerD from dif (By similarity).</text>
</comment>
<comment type="subunit">
    <text evidence="1">Homohexamer. Forms a ring that surrounds DNA (By similarity).</text>
</comment>
<comment type="subcellular location">
    <subcellularLocation>
        <location evidence="1">Cell inner membrane</location>
        <topology evidence="1">Multi-pass membrane protein</topology>
    </subcellularLocation>
    <text evidence="1">Located at the septum.</text>
</comment>
<comment type="domain">
    <text evidence="1">Consists of an N-terminal domain, which is sufficient for the localization to the septal ring and is required for cell division, followed by a linker domain, and a C-terminal domain, which forms the translocation motor involved in chromosome segregation. The C-terminal domain can be further subdivided into alpha, beta and gamma subdomains. The alpha and beta subdomains multimerise to produce a hexameric ring, contain the nucleotide binding motif and form the DNA pump. The gamma subdomain is a regulatory subdomain that controls translocation of DNA by recognition of KOPS motifs and interacts with XerD recombinase (By similarity).</text>
</comment>
<comment type="similarity">
    <text evidence="5">Belongs to the FtsK/SpoIIIE/SftA family.</text>
</comment>
<evidence type="ECO:0000250" key="1"/>
<evidence type="ECO:0000255" key="2"/>
<evidence type="ECO:0000255" key="3">
    <source>
        <dbReference type="PROSITE-ProRule" id="PRU00289"/>
    </source>
</evidence>
<evidence type="ECO:0000256" key="4">
    <source>
        <dbReference type="SAM" id="MobiDB-lite"/>
    </source>
</evidence>
<evidence type="ECO:0000305" key="5"/>